<comment type="function">
    <text evidence="1">Component of the large ribosomal subunit. The ribosome is a large ribonucleoprotein complex responsible for the synthesis of proteins in the cell.</text>
</comment>
<comment type="subunit">
    <text evidence="1">Component of the large ribosomal subunit.</text>
</comment>
<comment type="subcellular location">
    <subcellularLocation>
        <location evidence="1">Cytoplasm</location>
        <location evidence="1">Cytosol</location>
    </subcellularLocation>
    <subcellularLocation>
        <location evidence="1">Cytoplasm</location>
    </subcellularLocation>
    <subcellularLocation>
        <location evidence="2">Rough endoplasmic reticulum</location>
    </subcellularLocation>
    <text evidence="1 2">Detected on cytosolic polysomes (By similarity). Detected in ribosomes that are associated with the rough endoplasmic reticulum (By similarity).</text>
</comment>
<comment type="similarity">
    <text evidence="4">Belongs to the eukaryotic ribosomal protein eL18 family.</text>
</comment>
<keyword id="KW-0963">Cytoplasm</keyword>
<keyword id="KW-0256">Endoplasmic reticulum</keyword>
<keyword id="KW-1017">Isopeptide bond</keyword>
<keyword id="KW-0597">Phosphoprotein</keyword>
<keyword id="KW-1185">Reference proteome</keyword>
<keyword id="KW-0687">Ribonucleoprotein</keyword>
<keyword id="KW-0689">Ribosomal protein</keyword>
<keyword id="KW-0832">Ubl conjugation</keyword>
<name>RL18_MACFA</name>
<organism>
    <name type="scientific">Macaca fascicularis</name>
    <name type="common">Crab-eating macaque</name>
    <name type="synonym">Cynomolgus monkey</name>
    <dbReference type="NCBI Taxonomy" id="9541"/>
    <lineage>
        <taxon>Eukaryota</taxon>
        <taxon>Metazoa</taxon>
        <taxon>Chordata</taxon>
        <taxon>Craniata</taxon>
        <taxon>Vertebrata</taxon>
        <taxon>Euteleostomi</taxon>
        <taxon>Mammalia</taxon>
        <taxon>Eutheria</taxon>
        <taxon>Euarchontoglires</taxon>
        <taxon>Primates</taxon>
        <taxon>Haplorrhini</taxon>
        <taxon>Catarrhini</taxon>
        <taxon>Cercopithecidae</taxon>
        <taxon>Cercopithecinae</taxon>
        <taxon>Macaca</taxon>
    </lineage>
</organism>
<gene>
    <name type="primary">RPL18</name>
    <name type="ORF">QflA-13958</name>
</gene>
<dbReference type="EMBL" id="AB169565">
    <property type="protein sequence ID" value="BAE01647.1"/>
    <property type="molecule type" value="mRNA"/>
</dbReference>
<dbReference type="RefSeq" id="NP_001272313.1">
    <property type="nucleotide sequence ID" value="NM_001285384.1"/>
</dbReference>
<dbReference type="RefSeq" id="XP_045236854.1">
    <property type="nucleotide sequence ID" value="XM_045380919.2"/>
</dbReference>
<dbReference type="SMR" id="Q4R5H8"/>
<dbReference type="STRING" id="9541.ENSMFAP00000044238"/>
<dbReference type="Ensembl" id="ENSMFAT00000018532.2">
    <property type="protein sequence ID" value="ENSMFAP00000044238.1"/>
    <property type="gene ID" value="ENSMFAG00000039479.2"/>
</dbReference>
<dbReference type="GeneID" id="101867006"/>
<dbReference type="VEuPathDB" id="HostDB:ENSMFAG00000039479"/>
<dbReference type="eggNOG" id="KOG1714">
    <property type="taxonomic scope" value="Eukaryota"/>
</dbReference>
<dbReference type="GeneTree" id="ENSGT00390000012976"/>
<dbReference type="OMA" id="MSKANRP"/>
<dbReference type="Proteomes" id="UP000233100">
    <property type="component" value="Chromosome 19"/>
</dbReference>
<dbReference type="Bgee" id="ENSMFAG00000039479">
    <property type="expression patterns" value="Expressed in lymph node and 13 other cell types or tissues"/>
</dbReference>
<dbReference type="GO" id="GO:0022625">
    <property type="term" value="C:cytosolic large ribosomal subunit"/>
    <property type="evidence" value="ECO:0000250"/>
    <property type="project" value="UniProtKB"/>
</dbReference>
<dbReference type="GO" id="GO:0005730">
    <property type="term" value="C:nucleolus"/>
    <property type="evidence" value="ECO:0007669"/>
    <property type="project" value="Ensembl"/>
</dbReference>
<dbReference type="GO" id="GO:0005791">
    <property type="term" value="C:rough endoplasmic reticulum"/>
    <property type="evidence" value="ECO:0007669"/>
    <property type="project" value="UniProtKB-SubCell"/>
</dbReference>
<dbReference type="GO" id="GO:0003723">
    <property type="term" value="F:RNA binding"/>
    <property type="evidence" value="ECO:0007669"/>
    <property type="project" value="TreeGrafter"/>
</dbReference>
<dbReference type="GO" id="GO:0003735">
    <property type="term" value="F:structural constituent of ribosome"/>
    <property type="evidence" value="ECO:0007669"/>
    <property type="project" value="Ensembl"/>
</dbReference>
<dbReference type="GO" id="GO:0002181">
    <property type="term" value="P:cytoplasmic translation"/>
    <property type="evidence" value="ECO:0000250"/>
    <property type="project" value="UniProtKB"/>
</dbReference>
<dbReference type="FunFam" id="3.100.10.10:FF:000001">
    <property type="entry name" value="60S ribosomal protein L18"/>
    <property type="match status" value="1"/>
</dbReference>
<dbReference type="Gene3D" id="3.100.10.10">
    <property type="match status" value="1"/>
</dbReference>
<dbReference type="InterPro" id="IPR000039">
    <property type="entry name" value="Ribosomal_eL18"/>
</dbReference>
<dbReference type="InterPro" id="IPR021132">
    <property type="entry name" value="Ribosomal_eL18/eL18-A/B/_CS"/>
</dbReference>
<dbReference type="InterPro" id="IPR021131">
    <property type="entry name" value="Ribosomal_uL15/eL18"/>
</dbReference>
<dbReference type="InterPro" id="IPR036227">
    <property type="entry name" value="Ribosomal_uL15/eL18_sf"/>
</dbReference>
<dbReference type="PANTHER" id="PTHR10934">
    <property type="entry name" value="60S RIBOSOMAL PROTEIN L18"/>
    <property type="match status" value="1"/>
</dbReference>
<dbReference type="PANTHER" id="PTHR10934:SF2">
    <property type="entry name" value="LARGE RIBOSOMAL SUBUNIT PROTEIN EL18"/>
    <property type="match status" value="1"/>
</dbReference>
<dbReference type="Pfam" id="PF17135">
    <property type="entry name" value="Ribosomal_L18"/>
    <property type="match status" value="1"/>
</dbReference>
<dbReference type="SUPFAM" id="SSF52080">
    <property type="entry name" value="Ribosomal proteins L15p and L18e"/>
    <property type="match status" value="1"/>
</dbReference>
<dbReference type="PROSITE" id="PS01106">
    <property type="entry name" value="RIBOSOMAL_L18E"/>
    <property type="match status" value="1"/>
</dbReference>
<sequence>MGVDIRHNKDRKVRRKEPKSQDIYLRLLVKLYRFLARRTNSTFNQVVLKRLFMSRTNRPPLSLSRMIRKMKLPGRENKTAVVVGTITDDVRVQEVPKLKVCALRVTSRARSRILRAGGKILTFDQLALDSPKGCGTVLLSGPRKGREVYRHFGKAPGTPHSHTKPYVRSKGRKFERARGRRASRGYKN</sequence>
<feature type="chain" id="PRO_0000319312" description="Large ribosomal subunit protein eL18">
    <location>
        <begin position="1"/>
        <end position="188"/>
    </location>
</feature>
<feature type="region of interest" description="Disordered" evidence="3">
    <location>
        <begin position="151"/>
        <end position="188"/>
    </location>
</feature>
<feature type="compositionally biased region" description="Basic residues" evidence="3">
    <location>
        <begin position="161"/>
        <end position="171"/>
    </location>
</feature>
<feature type="compositionally biased region" description="Basic residues" evidence="3">
    <location>
        <begin position="178"/>
        <end position="188"/>
    </location>
</feature>
<feature type="modified residue" description="Phosphoserine" evidence="1">
    <location>
        <position position="130"/>
    </location>
</feature>
<feature type="modified residue" description="Phosphothreonine" evidence="1">
    <location>
        <position position="158"/>
    </location>
</feature>
<feature type="cross-link" description="Glycyl lysine isopeptide (Lys-Gly) (interchain with G-Cter in SUMO2)" evidence="1">
    <location>
        <position position="119"/>
    </location>
</feature>
<feature type="cross-link" description="Glycyl lysine isopeptide (Lys-Gly) (interchain with G-Cter in SUMO2)" evidence="1">
    <location>
        <position position="164"/>
    </location>
</feature>
<protein>
    <recommendedName>
        <fullName evidence="4">Large ribosomal subunit protein eL18</fullName>
    </recommendedName>
    <alternativeName>
        <fullName>60S ribosomal protein L18</fullName>
    </alternativeName>
</protein>
<evidence type="ECO:0000250" key="1">
    <source>
        <dbReference type="UniProtKB" id="Q07020"/>
    </source>
</evidence>
<evidence type="ECO:0000250" key="2">
    <source>
        <dbReference type="UniProtKB" id="Q95342"/>
    </source>
</evidence>
<evidence type="ECO:0000256" key="3">
    <source>
        <dbReference type="SAM" id="MobiDB-lite"/>
    </source>
</evidence>
<evidence type="ECO:0000305" key="4"/>
<accession>Q4R5H8</accession>
<proteinExistence type="evidence at transcript level"/>
<reference key="1">
    <citation type="submission" date="2005-06" db="EMBL/GenBank/DDBJ databases">
        <title>DNA sequences of macaque genes expressed in brain or testis and its evolutionary implications.</title>
        <authorList>
            <consortium name="International consortium for macaque cDNA sequencing and analysis"/>
        </authorList>
    </citation>
    <scope>NUCLEOTIDE SEQUENCE [LARGE SCALE MRNA]</scope>
    <source>
        <tissue>Frontal cortex</tissue>
    </source>
</reference>